<protein>
    <recommendedName>
        <fullName evidence="1">Large ribosomal subunit protein bL36</fullName>
    </recommendedName>
    <alternativeName>
        <fullName evidence="2">50S ribosomal protein L36</fullName>
    </alternativeName>
</protein>
<feature type="chain" id="PRO_1000101086" description="Large ribosomal subunit protein bL36">
    <location>
        <begin position="1"/>
        <end position="41"/>
    </location>
</feature>
<reference key="1">
    <citation type="journal article" date="2010" name="J. Bacteriol.">
        <title>Whole genome sequences of two Xylella fastidiosa strains (M12 and M23) causing almond leaf scorch disease in California.</title>
        <authorList>
            <person name="Chen J."/>
            <person name="Xie G."/>
            <person name="Han S."/>
            <person name="Chertkov O."/>
            <person name="Sims D."/>
            <person name="Civerolo E.L."/>
        </authorList>
    </citation>
    <scope>NUCLEOTIDE SEQUENCE [LARGE SCALE GENOMIC DNA]</scope>
    <source>
        <strain>M23</strain>
    </source>
</reference>
<gene>
    <name evidence="1" type="primary">rpmJ</name>
    <name type="ordered locus">XfasM23_1542</name>
</gene>
<proteinExistence type="inferred from homology"/>
<dbReference type="EMBL" id="CP001011">
    <property type="protein sequence ID" value="ACB92950.1"/>
    <property type="molecule type" value="Genomic_DNA"/>
</dbReference>
<dbReference type="SMR" id="B2I6X3"/>
<dbReference type="KEGG" id="xfn:XfasM23_1542"/>
<dbReference type="HOGENOM" id="CLU_135723_3_2_6"/>
<dbReference type="Proteomes" id="UP000001698">
    <property type="component" value="Chromosome"/>
</dbReference>
<dbReference type="GO" id="GO:1990904">
    <property type="term" value="C:ribonucleoprotein complex"/>
    <property type="evidence" value="ECO:0007669"/>
    <property type="project" value="UniProtKB-KW"/>
</dbReference>
<dbReference type="GO" id="GO:0005840">
    <property type="term" value="C:ribosome"/>
    <property type="evidence" value="ECO:0007669"/>
    <property type="project" value="UniProtKB-KW"/>
</dbReference>
<dbReference type="GO" id="GO:0003735">
    <property type="term" value="F:structural constituent of ribosome"/>
    <property type="evidence" value="ECO:0007669"/>
    <property type="project" value="InterPro"/>
</dbReference>
<dbReference type="GO" id="GO:0006412">
    <property type="term" value="P:translation"/>
    <property type="evidence" value="ECO:0007669"/>
    <property type="project" value="UniProtKB-UniRule"/>
</dbReference>
<dbReference type="HAMAP" id="MF_00251">
    <property type="entry name" value="Ribosomal_bL36"/>
    <property type="match status" value="1"/>
</dbReference>
<dbReference type="InterPro" id="IPR000473">
    <property type="entry name" value="Ribosomal_bL36"/>
</dbReference>
<dbReference type="InterPro" id="IPR035977">
    <property type="entry name" value="Ribosomal_bL36_sp"/>
</dbReference>
<dbReference type="InterPro" id="IPR047621">
    <property type="entry name" value="Ribosomal_L36_bact"/>
</dbReference>
<dbReference type="NCBIfam" id="NF002021">
    <property type="entry name" value="PRK00831.1"/>
    <property type="match status" value="1"/>
</dbReference>
<dbReference type="NCBIfam" id="TIGR01022">
    <property type="entry name" value="rpmJ_bact"/>
    <property type="match status" value="1"/>
</dbReference>
<dbReference type="PANTHER" id="PTHR47781">
    <property type="entry name" value="50S RIBOSOMAL PROTEIN L36 2"/>
    <property type="match status" value="1"/>
</dbReference>
<dbReference type="PANTHER" id="PTHR47781:SF1">
    <property type="entry name" value="LARGE RIBOSOMAL SUBUNIT PROTEIN BL36B"/>
    <property type="match status" value="1"/>
</dbReference>
<dbReference type="Pfam" id="PF00444">
    <property type="entry name" value="Ribosomal_L36"/>
    <property type="match status" value="1"/>
</dbReference>
<dbReference type="SUPFAM" id="SSF57840">
    <property type="entry name" value="Ribosomal protein L36"/>
    <property type="match status" value="1"/>
</dbReference>
<dbReference type="PROSITE" id="PS00828">
    <property type="entry name" value="RIBOSOMAL_L36"/>
    <property type="match status" value="1"/>
</dbReference>
<accession>B2I6X3</accession>
<name>RL36_XYLF2</name>
<sequence>MKVLSSLKSAKTRHRDCKVILRRGKIFVICKSNPRFKARQR</sequence>
<organism>
    <name type="scientific">Xylella fastidiosa (strain M23)</name>
    <dbReference type="NCBI Taxonomy" id="405441"/>
    <lineage>
        <taxon>Bacteria</taxon>
        <taxon>Pseudomonadati</taxon>
        <taxon>Pseudomonadota</taxon>
        <taxon>Gammaproteobacteria</taxon>
        <taxon>Lysobacterales</taxon>
        <taxon>Lysobacteraceae</taxon>
        <taxon>Xylella</taxon>
    </lineage>
</organism>
<keyword id="KW-0687">Ribonucleoprotein</keyword>
<keyword id="KW-0689">Ribosomal protein</keyword>
<comment type="similarity">
    <text evidence="1">Belongs to the bacterial ribosomal protein bL36 family.</text>
</comment>
<evidence type="ECO:0000255" key="1">
    <source>
        <dbReference type="HAMAP-Rule" id="MF_00251"/>
    </source>
</evidence>
<evidence type="ECO:0000305" key="2"/>